<dbReference type="EMBL" id="CP001020">
    <property type="protein sequence ID" value="ACJ20345.1"/>
    <property type="molecule type" value="Genomic_DNA"/>
</dbReference>
<dbReference type="RefSeq" id="WP_005770880.1">
    <property type="nucleotide sequence ID" value="NC_011528.1"/>
</dbReference>
<dbReference type="SMR" id="B6J7U6"/>
<dbReference type="KEGG" id="cbc:CbuK_1152"/>
<dbReference type="HOGENOM" id="CLU_017633_0_7_6"/>
<dbReference type="GO" id="GO:0005737">
    <property type="term" value="C:cytoplasm"/>
    <property type="evidence" value="ECO:0007669"/>
    <property type="project" value="UniProtKB-SubCell"/>
</dbReference>
<dbReference type="GO" id="GO:0005524">
    <property type="term" value="F:ATP binding"/>
    <property type="evidence" value="ECO:0007669"/>
    <property type="project" value="InterPro"/>
</dbReference>
<dbReference type="GO" id="GO:0031072">
    <property type="term" value="F:heat shock protein binding"/>
    <property type="evidence" value="ECO:0007669"/>
    <property type="project" value="InterPro"/>
</dbReference>
<dbReference type="GO" id="GO:0051082">
    <property type="term" value="F:unfolded protein binding"/>
    <property type="evidence" value="ECO:0007669"/>
    <property type="project" value="UniProtKB-UniRule"/>
</dbReference>
<dbReference type="GO" id="GO:0008270">
    <property type="term" value="F:zinc ion binding"/>
    <property type="evidence" value="ECO:0007669"/>
    <property type="project" value="UniProtKB-UniRule"/>
</dbReference>
<dbReference type="GO" id="GO:0051085">
    <property type="term" value="P:chaperone cofactor-dependent protein refolding"/>
    <property type="evidence" value="ECO:0007669"/>
    <property type="project" value="TreeGrafter"/>
</dbReference>
<dbReference type="GO" id="GO:0006260">
    <property type="term" value="P:DNA replication"/>
    <property type="evidence" value="ECO:0007669"/>
    <property type="project" value="UniProtKB-KW"/>
</dbReference>
<dbReference type="GO" id="GO:0042026">
    <property type="term" value="P:protein refolding"/>
    <property type="evidence" value="ECO:0007669"/>
    <property type="project" value="TreeGrafter"/>
</dbReference>
<dbReference type="GO" id="GO:0009408">
    <property type="term" value="P:response to heat"/>
    <property type="evidence" value="ECO:0007669"/>
    <property type="project" value="InterPro"/>
</dbReference>
<dbReference type="CDD" id="cd06257">
    <property type="entry name" value="DnaJ"/>
    <property type="match status" value="1"/>
</dbReference>
<dbReference type="CDD" id="cd10747">
    <property type="entry name" value="DnaJ_C"/>
    <property type="match status" value="1"/>
</dbReference>
<dbReference type="CDD" id="cd10719">
    <property type="entry name" value="DnaJ_zf"/>
    <property type="match status" value="1"/>
</dbReference>
<dbReference type="FunFam" id="1.10.287.110:FF:000160">
    <property type="entry name" value="Chaperone protein DnaJ"/>
    <property type="match status" value="1"/>
</dbReference>
<dbReference type="FunFam" id="2.10.230.10:FF:000002">
    <property type="entry name" value="Molecular chaperone DnaJ"/>
    <property type="match status" value="1"/>
</dbReference>
<dbReference type="FunFam" id="2.60.260.20:FF:000004">
    <property type="entry name" value="Molecular chaperone DnaJ"/>
    <property type="match status" value="1"/>
</dbReference>
<dbReference type="Gene3D" id="1.10.287.110">
    <property type="entry name" value="DnaJ domain"/>
    <property type="match status" value="1"/>
</dbReference>
<dbReference type="Gene3D" id="2.10.230.10">
    <property type="entry name" value="Heat shock protein DnaJ, cysteine-rich domain"/>
    <property type="match status" value="1"/>
</dbReference>
<dbReference type="Gene3D" id="2.60.260.20">
    <property type="entry name" value="Urease metallochaperone UreE, N-terminal domain"/>
    <property type="match status" value="2"/>
</dbReference>
<dbReference type="HAMAP" id="MF_01152">
    <property type="entry name" value="DnaJ"/>
    <property type="match status" value="1"/>
</dbReference>
<dbReference type="InterPro" id="IPR012724">
    <property type="entry name" value="DnaJ"/>
</dbReference>
<dbReference type="InterPro" id="IPR002939">
    <property type="entry name" value="DnaJ_C"/>
</dbReference>
<dbReference type="InterPro" id="IPR001623">
    <property type="entry name" value="DnaJ_domain"/>
</dbReference>
<dbReference type="InterPro" id="IPR018253">
    <property type="entry name" value="DnaJ_domain_CS"/>
</dbReference>
<dbReference type="InterPro" id="IPR008971">
    <property type="entry name" value="HSP40/DnaJ_pept-bd"/>
</dbReference>
<dbReference type="InterPro" id="IPR001305">
    <property type="entry name" value="HSP_DnaJ_Cys-rich_dom"/>
</dbReference>
<dbReference type="InterPro" id="IPR036410">
    <property type="entry name" value="HSP_DnaJ_Cys-rich_dom_sf"/>
</dbReference>
<dbReference type="InterPro" id="IPR036869">
    <property type="entry name" value="J_dom_sf"/>
</dbReference>
<dbReference type="NCBIfam" id="TIGR02349">
    <property type="entry name" value="DnaJ_bact"/>
    <property type="match status" value="1"/>
</dbReference>
<dbReference type="NCBIfam" id="NF008035">
    <property type="entry name" value="PRK10767.1"/>
    <property type="match status" value="1"/>
</dbReference>
<dbReference type="PANTHER" id="PTHR43096:SF48">
    <property type="entry name" value="CHAPERONE PROTEIN DNAJ"/>
    <property type="match status" value="1"/>
</dbReference>
<dbReference type="PANTHER" id="PTHR43096">
    <property type="entry name" value="DNAJ HOMOLOG 1, MITOCHONDRIAL-RELATED"/>
    <property type="match status" value="1"/>
</dbReference>
<dbReference type="Pfam" id="PF00226">
    <property type="entry name" value="DnaJ"/>
    <property type="match status" value="1"/>
</dbReference>
<dbReference type="Pfam" id="PF01556">
    <property type="entry name" value="DnaJ_C"/>
    <property type="match status" value="1"/>
</dbReference>
<dbReference type="Pfam" id="PF00684">
    <property type="entry name" value="DnaJ_CXXCXGXG"/>
    <property type="match status" value="1"/>
</dbReference>
<dbReference type="PRINTS" id="PR00625">
    <property type="entry name" value="JDOMAIN"/>
</dbReference>
<dbReference type="SMART" id="SM00271">
    <property type="entry name" value="DnaJ"/>
    <property type="match status" value="1"/>
</dbReference>
<dbReference type="SUPFAM" id="SSF46565">
    <property type="entry name" value="Chaperone J-domain"/>
    <property type="match status" value="1"/>
</dbReference>
<dbReference type="SUPFAM" id="SSF57938">
    <property type="entry name" value="DnaJ/Hsp40 cysteine-rich domain"/>
    <property type="match status" value="1"/>
</dbReference>
<dbReference type="SUPFAM" id="SSF49493">
    <property type="entry name" value="HSP40/DnaJ peptide-binding domain"/>
    <property type="match status" value="2"/>
</dbReference>
<dbReference type="PROSITE" id="PS00636">
    <property type="entry name" value="DNAJ_1"/>
    <property type="match status" value="1"/>
</dbReference>
<dbReference type="PROSITE" id="PS50076">
    <property type="entry name" value="DNAJ_2"/>
    <property type="match status" value="1"/>
</dbReference>
<dbReference type="PROSITE" id="PS51188">
    <property type="entry name" value="ZF_CR"/>
    <property type="match status" value="1"/>
</dbReference>
<organism>
    <name type="scientific">Coxiella burnetii (strain CbuK_Q154)</name>
    <name type="common">Coxiella burnetii (strain Q154)</name>
    <dbReference type="NCBI Taxonomy" id="434924"/>
    <lineage>
        <taxon>Bacteria</taxon>
        <taxon>Pseudomonadati</taxon>
        <taxon>Pseudomonadota</taxon>
        <taxon>Gammaproteobacteria</taxon>
        <taxon>Legionellales</taxon>
        <taxon>Coxiellaceae</taxon>
        <taxon>Coxiella</taxon>
    </lineage>
</organism>
<accession>B6J7U6</accession>
<protein>
    <recommendedName>
        <fullName evidence="1">Chaperone protein DnaJ</fullName>
    </recommendedName>
</protein>
<evidence type="ECO:0000255" key="1">
    <source>
        <dbReference type="HAMAP-Rule" id="MF_01152"/>
    </source>
</evidence>
<proteinExistence type="inferred from homology"/>
<reference key="1">
    <citation type="journal article" date="2009" name="Infect. Immun.">
        <title>Comparative genomics reveal extensive transposon-mediated genomic plasticity and diversity among potential effector proteins within the genus Coxiella.</title>
        <authorList>
            <person name="Beare P.A."/>
            <person name="Unsworth N."/>
            <person name="Andoh M."/>
            <person name="Voth D.E."/>
            <person name="Omsland A."/>
            <person name="Gilk S.D."/>
            <person name="Williams K.P."/>
            <person name="Sobral B.W."/>
            <person name="Kupko J.J. III"/>
            <person name="Porcella S.F."/>
            <person name="Samuel J.E."/>
            <person name="Heinzen R.A."/>
        </authorList>
    </citation>
    <scope>NUCLEOTIDE SEQUENCE [LARGE SCALE GENOMIC DNA]</scope>
    <source>
        <strain>CbuK_Q154</strain>
    </source>
</reference>
<sequence length="375" mass="41085">MAKRDYYEVLGVNRNATEAEVKKAFRRLAMKYHPDRNPGDKDAEVKFKEAREAYEVLCDSRKRASYDQFGHAGVEQTFGGAGAGGFGFGDLGDIFDDIFGDIFGGARGGQAREQRGADLAYELVLSLEEAVHGLSRTIKVPTWINCKTCNGSGAKKGSSPATCPRCNGSGQMRMQHGFLQVQQTCSVCRGRGQVIKDPCTDCHGQGRQQQTKTLSVKIPPGIDTGDRIRLAGEGEAGLFGAPPGDLYVQVRVKPHPLFHREGNDLHSEVPIDFTTAALGGEMEIPTLDGSVRLTIPPETQGGKQFRLRGKGVKALRSGAVGDLICHIVVETPVKLSPEQKDYLKQFAELLKKDEKNHSPRTRNWFDSVKDFFTSK</sequence>
<feature type="chain" id="PRO_1000137673" description="Chaperone protein DnaJ">
    <location>
        <begin position="1"/>
        <end position="375"/>
    </location>
</feature>
<feature type="domain" description="J" evidence="1">
    <location>
        <begin position="5"/>
        <end position="70"/>
    </location>
</feature>
<feature type="repeat" description="CXXCXGXG motif">
    <location>
        <begin position="146"/>
        <end position="153"/>
    </location>
</feature>
<feature type="repeat" description="CXXCXGXG motif">
    <location>
        <begin position="163"/>
        <end position="170"/>
    </location>
</feature>
<feature type="repeat" description="CXXCXGXG motif">
    <location>
        <begin position="185"/>
        <end position="192"/>
    </location>
</feature>
<feature type="repeat" description="CXXCXGXG motif">
    <location>
        <begin position="199"/>
        <end position="206"/>
    </location>
</feature>
<feature type="zinc finger region" description="CR-type" evidence="1">
    <location>
        <begin position="133"/>
        <end position="211"/>
    </location>
</feature>
<feature type="binding site" evidence="1">
    <location>
        <position position="146"/>
    </location>
    <ligand>
        <name>Zn(2+)</name>
        <dbReference type="ChEBI" id="CHEBI:29105"/>
        <label>1</label>
    </ligand>
</feature>
<feature type="binding site" evidence="1">
    <location>
        <position position="149"/>
    </location>
    <ligand>
        <name>Zn(2+)</name>
        <dbReference type="ChEBI" id="CHEBI:29105"/>
        <label>1</label>
    </ligand>
</feature>
<feature type="binding site" evidence="1">
    <location>
        <position position="163"/>
    </location>
    <ligand>
        <name>Zn(2+)</name>
        <dbReference type="ChEBI" id="CHEBI:29105"/>
        <label>2</label>
    </ligand>
</feature>
<feature type="binding site" evidence="1">
    <location>
        <position position="166"/>
    </location>
    <ligand>
        <name>Zn(2+)</name>
        <dbReference type="ChEBI" id="CHEBI:29105"/>
        <label>2</label>
    </ligand>
</feature>
<feature type="binding site" evidence="1">
    <location>
        <position position="185"/>
    </location>
    <ligand>
        <name>Zn(2+)</name>
        <dbReference type="ChEBI" id="CHEBI:29105"/>
        <label>2</label>
    </ligand>
</feature>
<feature type="binding site" evidence="1">
    <location>
        <position position="188"/>
    </location>
    <ligand>
        <name>Zn(2+)</name>
        <dbReference type="ChEBI" id="CHEBI:29105"/>
        <label>2</label>
    </ligand>
</feature>
<feature type="binding site" evidence="1">
    <location>
        <position position="199"/>
    </location>
    <ligand>
        <name>Zn(2+)</name>
        <dbReference type="ChEBI" id="CHEBI:29105"/>
        <label>1</label>
    </ligand>
</feature>
<feature type="binding site" evidence="1">
    <location>
        <position position="202"/>
    </location>
    <ligand>
        <name>Zn(2+)</name>
        <dbReference type="ChEBI" id="CHEBI:29105"/>
        <label>1</label>
    </ligand>
</feature>
<gene>
    <name evidence="1" type="primary">dnaJ</name>
    <name type="ordered locus">CbuK_1152</name>
</gene>
<name>DNAJ_COXB1</name>
<comment type="function">
    <text evidence="1">Participates actively in the response to hyperosmotic and heat shock by preventing the aggregation of stress-denatured proteins and by disaggregating proteins, also in an autonomous, DnaK-independent fashion. Unfolded proteins bind initially to DnaJ; upon interaction with the DnaJ-bound protein, DnaK hydrolyzes its bound ATP, resulting in the formation of a stable complex. GrpE releases ADP from DnaK; ATP binding to DnaK triggers the release of the substrate protein, thus completing the reaction cycle. Several rounds of ATP-dependent interactions between DnaJ, DnaK and GrpE are required for fully efficient folding. Also involved, together with DnaK and GrpE, in the DNA replication of plasmids through activation of initiation proteins.</text>
</comment>
<comment type="cofactor">
    <cofactor evidence="1">
        <name>Zn(2+)</name>
        <dbReference type="ChEBI" id="CHEBI:29105"/>
    </cofactor>
    <text evidence="1">Binds 2 Zn(2+) ions per monomer.</text>
</comment>
<comment type="subunit">
    <text evidence="1">Homodimer.</text>
</comment>
<comment type="subcellular location">
    <subcellularLocation>
        <location evidence="1">Cytoplasm</location>
    </subcellularLocation>
</comment>
<comment type="domain">
    <text evidence="1">The J domain is necessary and sufficient to stimulate DnaK ATPase activity. Zinc center 1 plays an important role in the autonomous, DnaK-independent chaperone activity of DnaJ. Zinc center 2 is essential for interaction with DnaK and for DnaJ activity.</text>
</comment>
<comment type="similarity">
    <text evidence="1">Belongs to the DnaJ family.</text>
</comment>
<keyword id="KW-0143">Chaperone</keyword>
<keyword id="KW-0963">Cytoplasm</keyword>
<keyword id="KW-0235">DNA replication</keyword>
<keyword id="KW-0479">Metal-binding</keyword>
<keyword id="KW-0677">Repeat</keyword>
<keyword id="KW-0346">Stress response</keyword>
<keyword id="KW-0862">Zinc</keyword>
<keyword id="KW-0863">Zinc-finger</keyword>